<reference key="1">
    <citation type="journal article" date="1997" name="Nature">
        <title>The nucleotide sequence of Saccharomyces cerevisiae chromosome XVI.</title>
        <authorList>
            <person name="Bussey H."/>
            <person name="Storms R.K."/>
            <person name="Ahmed A."/>
            <person name="Albermann K."/>
            <person name="Allen E."/>
            <person name="Ansorge W."/>
            <person name="Araujo R."/>
            <person name="Aparicio A."/>
            <person name="Barrell B.G."/>
            <person name="Badcock K."/>
            <person name="Benes V."/>
            <person name="Botstein D."/>
            <person name="Bowman S."/>
            <person name="Brueckner M."/>
            <person name="Carpenter J."/>
            <person name="Cherry J.M."/>
            <person name="Chung E."/>
            <person name="Churcher C.M."/>
            <person name="Coster F."/>
            <person name="Davis K."/>
            <person name="Davis R.W."/>
            <person name="Dietrich F.S."/>
            <person name="Delius H."/>
            <person name="DiPaolo T."/>
            <person name="Dubois E."/>
            <person name="Duesterhoeft A."/>
            <person name="Duncan M."/>
            <person name="Floeth M."/>
            <person name="Fortin N."/>
            <person name="Friesen J.D."/>
            <person name="Fritz C."/>
            <person name="Goffeau A."/>
            <person name="Hall J."/>
            <person name="Hebling U."/>
            <person name="Heumann K."/>
            <person name="Hilbert H."/>
            <person name="Hillier L.W."/>
            <person name="Hunicke-Smith S."/>
            <person name="Hyman R.W."/>
            <person name="Johnston M."/>
            <person name="Kalman S."/>
            <person name="Kleine K."/>
            <person name="Komp C."/>
            <person name="Kurdi O."/>
            <person name="Lashkari D."/>
            <person name="Lew H."/>
            <person name="Lin A."/>
            <person name="Lin D."/>
            <person name="Louis E.J."/>
            <person name="Marathe R."/>
            <person name="Messenguy F."/>
            <person name="Mewes H.-W."/>
            <person name="Mirtipati S."/>
            <person name="Moestl D."/>
            <person name="Mueller-Auer S."/>
            <person name="Namath A."/>
            <person name="Nentwich U."/>
            <person name="Oefner P."/>
            <person name="Pearson D."/>
            <person name="Petel F.X."/>
            <person name="Pohl T.M."/>
            <person name="Purnelle B."/>
            <person name="Rajandream M.A."/>
            <person name="Rechmann S."/>
            <person name="Rieger M."/>
            <person name="Riles L."/>
            <person name="Roberts D."/>
            <person name="Schaefer M."/>
            <person name="Scharfe M."/>
            <person name="Scherens B."/>
            <person name="Schramm S."/>
            <person name="Schroeder M."/>
            <person name="Sdicu A.-M."/>
            <person name="Tettelin H."/>
            <person name="Urrestarazu L.A."/>
            <person name="Ushinsky S."/>
            <person name="Vierendeels F."/>
            <person name="Vissers S."/>
            <person name="Voss H."/>
            <person name="Walsh S.V."/>
            <person name="Wambutt R."/>
            <person name="Wang Y."/>
            <person name="Wedler E."/>
            <person name="Wedler H."/>
            <person name="Winnett E."/>
            <person name="Zhong W.-W."/>
            <person name="Zollner A."/>
            <person name="Vo D.H."/>
            <person name="Hani J."/>
        </authorList>
    </citation>
    <scope>NUCLEOTIDE SEQUENCE [LARGE SCALE GENOMIC DNA]</scope>
    <source>
        <strain>ATCC 204508 / S288c</strain>
    </source>
</reference>
<reference key="2">
    <citation type="journal article" date="2014" name="G3 (Bethesda)">
        <title>The reference genome sequence of Saccharomyces cerevisiae: Then and now.</title>
        <authorList>
            <person name="Engel S.R."/>
            <person name="Dietrich F.S."/>
            <person name="Fisk D.G."/>
            <person name="Binkley G."/>
            <person name="Balakrishnan R."/>
            <person name="Costanzo M.C."/>
            <person name="Dwight S.S."/>
            <person name="Hitz B.C."/>
            <person name="Karra K."/>
            <person name="Nash R.S."/>
            <person name="Weng S."/>
            <person name="Wong E.D."/>
            <person name="Lloyd P."/>
            <person name="Skrzypek M.S."/>
            <person name="Miyasato S.R."/>
            <person name="Simison M."/>
            <person name="Cherry J.M."/>
        </authorList>
    </citation>
    <scope>GENOME REANNOTATION</scope>
    <source>
        <strain>ATCC 204508 / S288c</strain>
    </source>
</reference>
<reference key="3">
    <citation type="journal article" date="1999" name="EMBO J.">
        <title>Identification and specificities of N-terminal acetyltransferases from Saccharomyces cerevisiae.</title>
        <authorList>
            <person name="Polevoda B."/>
            <person name="Norbeck J."/>
            <person name="Takakura H."/>
            <person name="Blomberg A."/>
            <person name="Sherman F."/>
        </authorList>
    </citation>
    <scope>FUNCTION</scope>
    <scope>CATALYTIC ACTIVITY</scope>
</reference>
<reference key="4">
    <citation type="journal article" date="2003" name="J. Biol. Chem.">
        <title>Nat3p and Mdm20p are required for function of yeast NatB Nalpha-terminal acetyltransferase and of actin and tropomyosin.</title>
        <authorList>
            <person name="Polevoda B."/>
            <person name="Cardillo T.S."/>
            <person name="Doyle T.C."/>
            <person name="Bedi G.S."/>
            <person name="Sherman F."/>
        </authorList>
    </citation>
    <scope>IDENTIFICATION OF INITIATION SITE</scope>
    <scope>FUNCTION</scope>
    <scope>SUBUNIT</scope>
    <scope>IDENTIFICATION BY MASS SPECTROMETRY</scope>
</reference>
<reference key="5">
    <citation type="journal article" date="2003" name="Nature">
        <title>Global analysis of protein localization in budding yeast.</title>
        <authorList>
            <person name="Huh W.-K."/>
            <person name="Falvo J.V."/>
            <person name="Gerke L.C."/>
            <person name="Carroll A.S."/>
            <person name="Howson R.W."/>
            <person name="Weissman J.S."/>
            <person name="O'Shea E.K."/>
        </authorList>
    </citation>
    <scope>SUBCELLULAR LOCATION [LARGE SCALE ANALYSIS]</scope>
</reference>
<reference key="6">
    <citation type="journal article" date="2003" name="Nature">
        <title>Global analysis of protein expression in yeast.</title>
        <authorList>
            <person name="Ghaemmaghami S."/>
            <person name="Huh W.-K."/>
            <person name="Bower K."/>
            <person name="Howson R.W."/>
            <person name="Belle A."/>
            <person name="Dephoure N."/>
            <person name="O'Shea E.K."/>
            <person name="Weissman J.S."/>
        </authorList>
    </citation>
    <scope>LEVEL OF PROTEIN EXPRESSION [LARGE SCALE ANALYSIS]</scope>
</reference>
<reference key="7">
    <citation type="journal article" date="2003" name="Proc. Natl. Acad. Sci. U.S.A.">
        <title>Mdm20 protein functions with Nat3 protein to acetylate Tpm1 protein and regulate tropomyosin-actin interactions in budding yeast.</title>
        <authorList>
            <person name="Singer J.M."/>
            <person name="Shaw J.M."/>
        </authorList>
    </citation>
    <scope>FUNCTION</scope>
</reference>
<name>NAT3_YEAST</name>
<sequence>MTTIQPFEPVDLFKTNNVNLDILTENFPLEFYFEYMIIWPDLFFKSSEMTVDPTFKHNISGYMMAKTEGKTTEWHTHITAVTVAPRFRRISLASKLCNTLETMTDVMPHEVNFIDLFVKCNNQLAIKLYEKLGYSVYRRVVGYYNSAEDGYPDTLKKVDDNKDAFDMRKAMARDRNRSVRPDGRSHKCYPHDVRF</sequence>
<gene>
    <name evidence="9" type="primary">NAT3</name>
    <name type="ordered locus">YPR131C</name>
</gene>
<organism>
    <name type="scientific">Saccharomyces cerevisiae (strain ATCC 204508 / S288c)</name>
    <name type="common">Baker's yeast</name>
    <dbReference type="NCBI Taxonomy" id="559292"/>
    <lineage>
        <taxon>Eukaryota</taxon>
        <taxon>Fungi</taxon>
        <taxon>Dikarya</taxon>
        <taxon>Ascomycota</taxon>
        <taxon>Saccharomycotina</taxon>
        <taxon>Saccharomycetes</taxon>
        <taxon>Saccharomycetales</taxon>
        <taxon>Saccharomycetaceae</taxon>
        <taxon>Saccharomyces</taxon>
    </lineage>
</organism>
<feature type="chain" id="PRO_0000074635" description="N-terminal acetyltransferase B complex catalytic subunit NAT3">
    <location>
        <begin position="1"/>
        <end position="195"/>
    </location>
</feature>
<feature type="domain" description="N-acetyltransferase" evidence="2">
    <location>
        <begin position="2"/>
        <end position="172"/>
    </location>
</feature>
<proteinExistence type="evidence at protein level"/>
<dbReference type="EC" id="2.3.1.254" evidence="3"/>
<dbReference type="EMBL" id="U40829">
    <property type="protein sequence ID" value="AAB68272.1"/>
    <property type="status" value="ALT_INIT"/>
    <property type="molecule type" value="Genomic_DNA"/>
</dbReference>
<dbReference type="EMBL" id="BK006949">
    <property type="protein sequence ID" value="DAA11543.1"/>
    <property type="molecule type" value="Genomic_DNA"/>
</dbReference>
<dbReference type="PIR" id="S69021">
    <property type="entry name" value="S69021"/>
</dbReference>
<dbReference type="RefSeq" id="NP_015456.2">
    <property type="nucleotide sequence ID" value="NM_001184228.1"/>
</dbReference>
<dbReference type="PDB" id="8BIP">
    <property type="method" value="EM"/>
    <property type="resolution" value="3.10 A"/>
    <property type="chains" value="A=1-195"/>
</dbReference>
<dbReference type="PDB" id="8BJQ">
    <property type="method" value="EM"/>
    <property type="resolution" value="3.80 A"/>
    <property type="chains" value="A/C=1-195"/>
</dbReference>
<dbReference type="PDBsum" id="8BIP"/>
<dbReference type="PDBsum" id="8BJQ"/>
<dbReference type="EMDB" id="EMD-16086"/>
<dbReference type="EMDB" id="EMD-16090"/>
<dbReference type="SMR" id="Q06504"/>
<dbReference type="BioGRID" id="36297">
    <property type="interactions" value="60"/>
</dbReference>
<dbReference type="ComplexPortal" id="CPX-782">
    <property type="entry name" value="NatB N-alpha-acetyltransferase complex"/>
</dbReference>
<dbReference type="FunCoup" id="Q06504">
    <property type="interactions" value="895"/>
</dbReference>
<dbReference type="IntAct" id="Q06504">
    <property type="interactions" value="4"/>
</dbReference>
<dbReference type="MINT" id="Q06504"/>
<dbReference type="STRING" id="4932.YPR131C"/>
<dbReference type="GlyGen" id="Q06504">
    <property type="glycosylation" value="1 site"/>
</dbReference>
<dbReference type="iPTMnet" id="Q06504"/>
<dbReference type="PaxDb" id="4932-YPR131C"/>
<dbReference type="PeptideAtlas" id="Q06504"/>
<dbReference type="EnsemblFungi" id="YPR131C_mRNA">
    <property type="protein sequence ID" value="YPR131C"/>
    <property type="gene ID" value="YPR131C"/>
</dbReference>
<dbReference type="GeneID" id="856249"/>
<dbReference type="KEGG" id="sce:YPR131C"/>
<dbReference type="AGR" id="SGD:S000006335"/>
<dbReference type="SGD" id="S000006335">
    <property type="gene designation" value="NAT3"/>
</dbReference>
<dbReference type="VEuPathDB" id="FungiDB:YPR131C"/>
<dbReference type="eggNOG" id="KOG3234">
    <property type="taxonomic scope" value="Eukaryota"/>
</dbReference>
<dbReference type="GeneTree" id="ENSGT00550000075046"/>
<dbReference type="HOGENOM" id="CLU_013985_7_1_1"/>
<dbReference type="InParanoid" id="Q06504"/>
<dbReference type="OMA" id="EQHPSMR"/>
<dbReference type="OrthoDB" id="10264728at2759"/>
<dbReference type="BioCyc" id="YEAST:G3O-34267-MONOMER"/>
<dbReference type="BRENDA" id="2.3.1.254">
    <property type="organism ID" value="984"/>
</dbReference>
<dbReference type="BioGRID-ORCS" id="856249">
    <property type="hits" value="9 hits in 10 CRISPR screens"/>
</dbReference>
<dbReference type="PRO" id="PR:Q06504"/>
<dbReference type="Proteomes" id="UP000002311">
    <property type="component" value="Chromosome XVI"/>
</dbReference>
<dbReference type="RNAct" id="Q06504">
    <property type="molecule type" value="protein"/>
</dbReference>
<dbReference type="GO" id="GO:0005737">
    <property type="term" value="C:cytoplasm"/>
    <property type="evidence" value="ECO:0007005"/>
    <property type="project" value="SGD"/>
</dbReference>
<dbReference type="GO" id="GO:0031416">
    <property type="term" value="C:NatB complex"/>
    <property type="evidence" value="ECO:0000314"/>
    <property type="project" value="SGD"/>
</dbReference>
<dbReference type="GO" id="GO:0120518">
    <property type="term" value="F:protein N-terminal-methionine acetyltransferase activity"/>
    <property type="evidence" value="ECO:0007669"/>
    <property type="project" value="UniProtKB-EC"/>
</dbReference>
<dbReference type="GO" id="GO:0004596">
    <property type="term" value="F:protein-N-terminal amino-acid acetyltransferase activity"/>
    <property type="evidence" value="ECO:0000315"/>
    <property type="project" value="SGD"/>
</dbReference>
<dbReference type="GO" id="GO:0036503">
    <property type="term" value="P:ERAD pathway"/>
    <property type="evidence" value="ECO:0000315"/>
    <property type="project" value="SGD"/>
</dbReference>
<dbReference type="GO" id="GO:0000001">
    <property type="term" value="P:mitochondrion inheritance"/>
    <property type="evidence" value="ECO:0000315"/>
    <property type="project" value="SGD"/>
</dbReference>
<dbReference type="GO" id="GO:0032956">
    <property type="term" value="P:regulation of actin cytoskeleton organization"/>
    <property type="evidence" value="ECO:0000315"/>
    <property type="project" value="SGD"/>
</dbReference>
<dbReference type="FunFam" id="3.40.630.30:FF:000065">
    <property type="entry name" value="N-terminal acetyltransferase complex ARD1 subunit homolog"/>
    <property type="match status" value="1"/>
</dbReference>
<dbReference type="Gene3D" id="3.40.630.30">
    <property type="match status" value="1"/>
</dbReference>
<dbReference type="InterPro" id="IPR016181">
    <property type="entry name" value="Acyl_CoA_acyltransferase"/>
</dbReference>
<dbReference type="InterPro" id="IPR000182">
    <property type="entry name" value="GNAT_dom"/>
</dbReference>
<dbReference type="InterPro" id="IPR051646">
    <property type="entry name" value="NatB_acetyltransferase_subunit"/>
</dbReference>
<dbReference type="PANTHER" id="PTHR45910">
    <property type="entry name" value="N-ALPHA-ACETYLTRANSFERASE 20"/>
    <property type="match status" value="1"/>
</dbReference>
<dbReference type="PANTHER" id="PTHR45910:SF1">
    <property type="entry name" value="N-ALPHA-ACETYLTRANSFERASE 20"/>
    <property type="match status" value="1"/>
</dbReference>
<dbReference type="Pfam" id="PF00583">
    <property type="entry name" value="Acetyltransf_1"/>
    <property type="match status" value="1"/>
</dbReference>
<dbReference type="SUPFAM" id="SSF55729">
    <property type="entry name" value="Acyl-CoA N-acyltransferases (Nat)"/>
    <property type="match status" value="1"/>
</dbReference>
<dbReference type="PROSITE" id="PS51186">
    <property type="entry name" value="GNAT"/>
    <property type="match status" value="1"/>
</dbReference>
<keyword id="KW-0002">3D-structure</keyword>
<keyword id="KW-0012">Acyltransferase</keyword>
<keyword id="KW-0963">Cytoplasm</keyword>
<keyword id="KW-1185">Reference proteome</keyword>
<keyword id="KW-0808">Transferase</keyword>
<evidence type="ECO:0000255" key="1"/>
<evidence type="ECO:0000255" key="2">
    <source>
        <dbReference type="PROSITE-ProRule" id="PRU00532"/>
    </source>
</evidence>
<evidence type="ECO:0000269" key="3">
    <source>
    </source>
</evidence>
<evidence type="ECO:0000269" key="4">
    <source>
    </source>
</evidence>
<evidence type="ECO:0000269" key="5">
    <source>
    </source>
</evidence>
<evidence type="ECO:0000269" key="6">
    <source>
    </source>
</evidence>
<evidence type="ECO:0000269" key="7">
    <source>
    </source>
</evidence>
<evidence type="ECO:0000305" key="8"/>
<evidence type="ECO:0000312" key="9">
    <source>
        <dbReference type="SGD" id="S000006335"/>
    </source>
</evidence>
<comment type="function">
    <text evidence="3 4 5">Catalytic subunit of the NatB N-terminal acetyltransferase, which catalyzes acetylation of the amino-terminal methionine residues of all proteins beginning with Met-Asp or Met-Glu and of some proteins beginning with Met-Asn, Met-Gln or Met-Met. NatB acetylates TPM1 protein and regulates tropomyocin-actin interactions, it is presumed to N-acetylate 15% of all yeast proteins.</text>
</comment>
<comment type="catalytic activity">
    <reaction evidence="3">
        <text>N-terminal L-methionyl-L-asparaginyl-[protein] + acetyl-CoA = N-terminal N(alpha)-acetyl-L-methionyl-L-asparaginyl-[protein] + CoA + H(+)</text>
        <dbReference type="Rhea" id="RHEA:50484"/>
        <dbReference type="Rhea" id="RHEA-COMP:12694"/>
        <dbReference type="Rhea" id="RHEA-COMP:12695"/>
        <dbReference type="ChEBI" id="CHEBI:15378"/>
        <dbReference type="ChEBI" id="CHEBI:57287"/>
        <dbReference type="ChEBI" id="CHEBI:57288"/>
        <dbReference type="ChEBI" id="CHEBI:133356"/>
        <dbReference type="ChEBI" id="CHEBI:133358"/>
        <dbReference type="EC" id="2.3.1.254"/>
    </reaction>
</comment>
<comment type="catalytic activity">
    <reaction evidence="3">
        <text>N-terminal L-methionyl-L-glutaminyl-[protein] + acetyl-CoA = N-terminal N(alpha)-acetyl-L-methionyl-L-glutaminyl-[protein] + CoA + H(+)</text>
        <dbReference type="Rhea" id="RHEA:50492"/>
        <dbReference type="Rhea" id="RHEA-COMP:12698"/>
        <dbReference type="Rhea" id="RHEA-COMP:12699"/>
        <dbReference type="ChEBI" id="CHEBI:15378"/>
        <dbReference type="ChEBI" id="CHEBI:57287"/>
        <dbReference type="ChEBI" id="CHEBI:57288"/>
        <dbReference type="ChEBI" id="CHEBI:133361"/>
        <dbReference type="ChEBI" id="CHEBI:133362"/>
        <dbReference type="EC" id="2.3.1.254"/>
    </reaction>
</comment>
<comment type="catalytic activity">
    <reaction evidence="3">
        <text>N-terminal L-methionyl-L-aspartyl-[protein] + acetyl-CoA = N-terminal N(alpha)-acetyl-L-methionyl-L-aspartyl-[protein] + CoA + H(+)</text>
        <dbReference type="Rhea" id="RHEA:50480"/>
        <dbReference type="Rhea" id="RHEA-COMP:12692"/>
        <dbReference type="Rhea" id="RHEA-COMP:12693"/>
        <dbReference type="ChEBI" id="CHEBI:15378"/>
        <dbReference type="ChEBI" id="CHEBI:57287"/>
        <dbReference type="ChEBI" id="CHEBI:57288"/>
        <dbReference type="ChEBI" id="CHEBI:133045"/>
        <dbReference type="ChEBI" id="CHEBI:133063"/>
        <dbReference type="EC" id="2.3.1.254"/>
    </reaction>
</comment>
<comment type="catalytic activity">
    <reaction evidence="3">
        <text>N-terminal L-methionyl-L-glutamyl-[protein] + acetyl-CoA = N-terminal N(alpha)-acetyl-L-methionyl-L-glutamyl-[protein] + CoA + H(+)</text>
        <dbReference type="Rhea" id="RHEA:50488"/>
        <dbReference type="Rhea" id="RHEA-COMP:12696"/>
        <dbReference type="Rhea" id="RHEA-COMP:12697"/>
        <dbReference type="ChEBI" id="CHEBI:15378"/>
        <dbReference type="ChEBI" id="CHEBI:57287"/>
        <dbReference type="ChEBI" id="CHEBI:57288"/>
        <dbReference type="ChEBI" id="CHEBI:133359"/>
        <dbReference type="ChEBI" id="CHEBI:133360"/>
        <dbReference type="EC" id="2.3.1.254"/>
    </reaction>
</comment>
<comment type="subunit">
    <text evidence="4">Component of the N-terminal acetyltransferase B (NatB) complex, which is composed of NAT3 and MDM20.</text>
</comment>
<comment type="subcellular location">
    <subcellularLocation>
        <location evidence="6">Cytoplasm</location>
    </subcellularLocation>
</comment>
<comment type="miscellaneous">
    <text evidence="7">Present with 639 molecules/cell in log phase SD medium.</text>
</comment>
<comment type="similarity">
    <text evidence="1">Belongs to the acetyltransferase family. GNAT subfamily.</text>
</comment>
<comment type="sequence caution" evidence="8">
    <conflict type="erroneous initiation">
        <sequence resource="EMBL-CDS" id="AAB68272"/>
    </conflict>
</comment>
<accession>Q06504</accession>
<accession>D6W4C7</accession>
<protein>
    <recommendedName>
        <fullName>N-terminal acetyltransferase B complex catalytic subunit NAT3</fullName>
        <shortName>NatB complex subunit NAT3</shortName>
        <ecNumber evidence="3">2.3.1.254</ecNumber>
    </recommendedName>
    <alternativeName>
        <fullName>NatB Nalpha terminal acetyltransferase 3</fullName>
    </alternativeName>
</protein>